<keyword id="KW-0028">Amino-acid biosynthesis</keyword>
<keyword id="KW-0055">Arginine biosynthesis</keyword>
<keyword id="KW-0067">ATP-binding</keyword>
<keyword id="KW-0963">Cytoplasm</keyword>
<keyword id="KW-0418">Kinase</keyword>
<keyword id="KW-0547">Nucleotide-binding</keyword>
<keyword id="KW-0808">Transferase</keyword>
<protein>
    <recommendedName>
        <fullName evidence="1">Acetylglutamate kinase</fullName>
        <ecNumber evidence="1">2.7.2.8</ecNumber>
    </recommendedName>
    <alternativeName>
        <fullName evidence="1">N-acetyl-L-glutamate 5-phosphotransferase</fullName>
    </alternativeName>
    <alternativeName>
        <fullName evidence="1">NAG kinase</fullName>
        <shortName evidence="1">NAGK</shortName>
    </alternativeName>
</protein>
<evidence type="ECO:0000255" key="1">
    <source>
        <dbReference type="HAMAP-Rule" id="MF_00082"/>
    </source>
</evidence>
<gene>
    <name evidence="1" type="primary">argB</name>
    <name type="ordered locus">BCE33L3885</name>
</gene>
<reference key="1">
    <citation type="journal article" date="2006" name="J. Bacteriol.">
        <title>Pathogenomic sequence analysis of Bacillus cereus and Bacillus thuringiensis isolates closely related to Bacillus anthracis.</title>
        <authorList>
            <person name="Han C.S."/>
            <person name="Xie G."/>
            <person name="Challacombe J.F."/>
            <person name="Altherr M.R."/>
            <person name="Bhotika S.S."/>
            <person name="Bruce D."/>
            <person name="Campbell C.S."/>
            <person name="Campbell M.L."/>
            <person name="Chen J."/>
            <person name="Chertkov O."/>
            <person name="Cleland C."/>
            <person name="Dimitrijevic M."/>
            <person name="Doggett N.A."/>
            <person name="Fawcett J.J."/>
            <person name="Glavina T."/>
            <person name="Goodwin L.A."/>
            <person name="Hill K.K."/>
            <person name="Hitchcock P."/>
            <person name="Jackson P.J."/>
            <person name="Keim P."/>
            <person name="Kewalramani A.R."/>
            <person name="Longmire J."/>
            <person name="Lucas S."/>
            <person name="Malfatti S."/>
            <person name="McMurry K."/>
            <person name="Meincke L.J."/>
            <person name="Misra M."/>
            <person name="Moseman B.L."/>
            <person name="Mundt M."/>
            <person name="Munk A.C."/>
            <person name="Okinaka R.T."/>
            <person name="Parson-Quintana B."/>
            <person name="Reilly L.P."/>
            <person name="Richardson P."/>
            <person name="Robinson D.L."/>
            <person name="Rubin E."/>
            <person name="Saunders E."/>
            <person name="Tapia R."/>
            <person name="Tesmer J.G."/>
            <person name="Thayer N."/>
            <person name="Thompson L.S."/>
            <person name="Tice H."/>
            <person name="Ticknor L.O."/>
            <person name="Wills P.L."/>
            <person name="Brettin T.S."/>
            <person name="Gilna P."/>
        </authorList>
    </citation>
    <scope>NUCLEOTIDE SEQUENCE [LARGE SCALE GENOMIC DNA]</scope>
    <source>
        <strain>ZK / E33L</strain>
    </source>
</reference>
<sequence>MSDYVVVKCGGSMLDQLNDVFFDCIKKLQQKYKVVIVHGGGPEIDAQLKDCNINVEKRDGLRVTPKEVMDVVQMVLCGSTNKKLVMNLQKHNLRAVGCSGCDGNLLQVQPVSEEIGYVGEVRYVETALLKGLINMNYIPVIAPVGINDNEIYNINADTAAAGIAAALSAKELIFITDVDGVLHEGKLVKKTDEFEIVNFIENGVITGGMIPKVQAAIASLKMGVQKVSIVNGMKDFTEVTGECIGTTVTRGVSIA</sequence>
<dbReference type="EC" id="2.7.2.8" evidence="1"/>
<dbReference type="EMBL" id="CP000001">
    <property type="protein sequence ID" value="AAU16383.1"/>
    <property type="molecule type" value="Genomic_DNA"/>
</dbReference>
<dbReference type="RefSeq" id="WP_001287094.1">
    <property type="nucleotide sequence ID" value="NC_006274.1"/>
</dbReference>
<dbReference type="SMR" id="Q635F2"/>
<dbReference type="KEGG" id="bcz:BCE33L3885"/>
<dbReference type="PATRIC" id="fig|288681.22.peg.1514"/>
<dbReference type="UniPathway" id="UPA00068">
    <property type="reaction ID" value="UER00107"/>
</dbReference>
<dbReference type="Proteomes" id="UP000002612">
    <property type="component" value="Chromosome"/>
</dbReference>
<dbReference type="GO" id="GO:0005737">
    <property type="term" value="C:cytoplasm"/>
    <property type="evidence" value="ECO:0007669"/>
    <property type="project" value="UniProtKB-SubCell"/>
</dbReference>
<dbReference type="GO" id="GO:0003991">
    <property type="term" value="F:acetylglutamate kinase activity"/>
    <property type="evidence" value="ECO:0007669"/>
    <property type="project" value="UniProtKB-UniRule"/>
</dbReference>
<dbReference type="GO" id="GO:0005524">
    <property type="term" value="F:ATP binding"/>
    <property type="evidence" value="ECO:0007669"/>
    <property type="project" value="UniProtKB-UniRule"/>
</dbReference>
<dbReference type="GO" id="GO:0042450">
    <property type="term" value="P:arginine biosynthetic process via ornithine"/>
    <property type="evidence" value="ECO:0007669"/>
    <property type="project" value="UniProtKB-UniRule"/>
</dbReference>
<dbReference type="GO" id="GO:0006526">
    <property type="term" value="P:L-arginine biosynthetic process"/>
    <property type="evidence" value="ECO:0007669"/>
    <property type="project" value="UniProtKB-UniPathway"/>
</dbReference>
<dbReference type="CDD" id="cd04238">
    <property type="entry name" value="AAK_NAGK-like"/>
    <property type="match status" value="1"/>
</dbReference>
<dbReference type="FunFam" id="3.40.1160.10:FF:000034">
    <property type="entry name" value="Acetylglutamate kinase"/>
    <property type="match status" value="1"/>
</dbReference>
<dbReference type="Gene3D" id="3.40.1160.10">
    <property type="entry name" value="Acetylglutamate kinase-like"/>
    <property type="match status" value="1"/>
</dbReference>
<dbReference type="HAMAP" id="MF_00082">
    <property type="entry name" value="ArgB"/>
    <property type="match status" value="1"/>
</dbReference>
<dbReference type="InterPro" id="IPR036393">
    <property type="entry name" value="AceGlu_kinase-like_sf"/>
</dbReference>
<dbReference type="InterPro" id="IPR004662">
    <property type="entry name" value="AcgluKinase_fam"/>
</dbReference>
<dbReference type="InterPro" id="IPR037528">
    <property type="entry name" value="ArgB"/>
</dbReference>
<dbReference type="InterPro" id="IPR001048">
    <property type="entry name" value="Asp/Glu/Uridylate_kinase"/>
</dbReference>
<dbReference type="NCBIfam" id="TIGR00761">
    <property type="entry name" value="argB"/>
    <property type="match status" value="1"/>
</dbReference>
<dbReference type="PANTHER" id="PTHR23342">
    <property type="entry name" value="N-ACETYLGLUTAMATE SYNTHASE"/>
    <property type="match status" value="1"/>
</dbReference>
<dbReference type="PANTHER" id="PTHR23342:SF0">
    <property type="entry name" value="N-ACETYLGLUTAMATE SYNTHASE, MITOCHONDRIAL"/>
    <property type="match status" value="1"/>
</dbReference>
<dbReference type="Pfam" id="PF00696">
    <property type="entry name" value="AA_kinase"/>
    <property type="match status" value="1"/>
</dbReference>
<dbReference type="PIRSF" id="PIRSF000728">
    <property type="entry name" value="NAGK"/>
    <property type="match status" value="1"/>
</dbReference>
<dbReference type="SUPFAM" id="SSF53633">
    <property type="entry name" value="Carbamate kinase-like"/>
    <property type="match status" value="1"/>
</dbReference>
<name>ARGB_BACCZ</name>
<feature type="chain" id="PRO_0000112580" description="Acetylglutamate kinase">
    <location>
        <begin position="1"/>
        <end position="255"/>
    </location>
</feature>
<feature type="binding site" evidence="1">
    <location>
        <begin position="40"/>
        <end position="41"/>
    </location>
    <ligand>
        <name>substrate</name>
    </ligand>
</feature>
<feature type="binding site" evidence="1">
    <location>
        <position position="62"/>
    </location>
    <ligand>
        <name>substrate</name>
    </ligand>
</feature>
<feature type="binding site" evidence="1">
    <location>
        <position position="153"/>
    </location>
    <ligand>
        <name>substrate</name>
    </ligand>
</feature>
<feature type="site" description="Transition state stabilizer" evidence="1">
    <location>
        <position position="8"/>
    </location>
</feature>
<feature type="site" description="Transition state stabilizer" evidence="1">
    <location>
        <position position="212"/>
    </location>
</feature>
<proteinExistence type="inferred from homology"/>
<accession>Q635F2</accession>
<comment type="function">
    <text evidence="1">Catalyzes the ATP-dependent phosphorylation of N-acetyl-L-glutamate.</text>
</comment>
<comment type="catalytic activity">
    <reaction evidence="1">
        <text>N-acetyl-L-glutamate + ATP = N-acetyl-L-glutamyl 5-phosphate + ADP</text>
        <dbReference type="Rhea" id="RHEA:14629"/>
        <dbReference type="ChEBI" id="CHEBI:30616"/>
        <dbReference type="ChEBI" id="CHEBI:44337"/>
        <dbReference type="ChEBI" id="CHEBI:57936"/>
        <dbReference type="ChEBI" id="CHEBI:456216"/>
        <dbReference type="EC" id="2.7.2.8"/>
    </reaction>
</comment>
<comment type="pathway">
    <text evidence="1">Amino-acid biosynthesis; L-arginine biosynthesis; N(2)-acetyl-L-ornithine from L-glutamate: step 2/4.</text>
</comment>
<comment type="subcellular location">
    <subcellularLocation>
        <location evidence="1">Cytoplasm</location>
    </subcellularLocation>
</comment>
<comment type="similarity">
    <text evidence="1">Belongs to the acetylglutamate kinase family. ArgB subfamily.</text>
</comment>
<organism>
    <name type="scientific">Bacillus cereus (strain ZK / E33L)</name>
    <dbReference type="NCBI Taxonomy" id="288681"/>
    <lineage>
        <taxon>Bacteria</taxon>
        <taxon>Bacillati</taxon>
        <taxon>Bacillota</taxon>
        <taxon>Bacilli</taxon>
        <taxon>Bacillales</taxon>
        <taxon>Bacillaceae</taxon>
        <taxon>Bacillus</taxon>
        <taxon>Bacillus cereus group</taxon>
    </lineage>
</organism>